<evidence type="ECO:0000255" key="1">
    <source>
        <dbReference type="HAMAP-Rule" id="MF_00368"/>
    </source>
</evidence>
<evidence type="ECO:0000305" key="2"/>
<reference key="1">
    <citation type="submission" date="2008-03" db="EMBL/GenBank/DDBJ databases">
        <title>Complete sequence of chromosome of Methylobacterium radiotolerans JCM 2831.</title>
        <authorList>
            <consortium name="US DOE Joint Genome Institute"/>
            <person name="Copeland A."/>
            <person name="Lucas S."/>
            <person name="Lapidus A."/>
            <person name="Glavina del Rio T."/>
            <person name="Dalin E."/>
            <person name="Tice H."/>
            <person name="Bruce D."/>
            <person name="Goodwin L."/>
            <person name="Pitluck S."/>
            <person name="Kiss H."/>
            <person name="Brettin T."/>
            <person name="Detter J.C."/>
            <person name="Han C."/>
            <person name="Kuske C.R."/>
            <person name="Schmutz J."/>
            <person name="Larimer F."/>
            <person name="Land M."/>
            <person name="Hauser L."/>
            <person name="Kyrpides N."/>
            <person name="Mikhailova N."/>
            <person name="Marx C.J."/>
            <person name="Richardson P."/>
        </authorList>
    </citation>
    <scope>NUCLEOTIDE SEQUENCE [LARGE SCALE GENOMIC DNA]</scope>
    <source>
        <strain>ATCC 27329 / DSM 1819 / JCM 2831 / NBRC 15690 / NCIMB 10815 / 0-1</strain>
    </source>
</reference>
<organism>
    <name type="scientific">Methylobacterium radiotolerans (strain ATCC 27329 / DSM 1819 / JCM 2831 / NBRC 15690 / NCIMB 10815 / 0-1)</name>
    <dbReference type="NCBI Taxonomy" id="426355"/>
    <lineage>
        <taxon>Bacteria</taxon>
        <taxon>Pseudomonadati</taxon>
        <taxon>Pseudomonadota</taxon>
        <taxon>Alphaproteobacteria</taxon>
        <taxon>Hyphomicrobiales</taxon>
        <taxon>Methylobacteriaceae</taxon>
        <taxon>Methylobacterium</taxon>
    </lineage>
</organism>
<dbReference type="EMBL" id="CP001001">
    <property type="protein sequence ID" value="ACB25815.1"/>
    <property type="molecule type" value="Genomic_DNA"/>
</dbReference>
<dbReference type="RefSeq" id="WP_012320773.1">
    <property type="nucleotide sequence ID" value="NC_010505.1"/>
</dbReference>
<dbReference type="SMR" id="B1LY44"/>
<dbReference type="STRING" id="426355.Mrad2831_3840"/>
<dbReference type="GeneID" id="96605940"/>
<dbReference type="KEGG" id="mrd:Mrad2831_3840"/>
<dbReference type="eggNOG" id="COG0222">
    <property type="taxonomic scope" value="Bacteria"/>
</dbReference>
<dbReference type="HOGENOM" id="CLU_086499_3_0_5"/>
<dbReference type="OrthoDB" id="9811748at2"/>
<dbReference type="Proteomes" id="UP000006589">
    <property type="component" value="Chromosome"/>
</dbReference>
<dbReference type="GO" id="GO:0022625">
    <property type="term" value="C:cytosolic large ribosomal subunit"/>
    <property type="evidence" value="ECO:0007669"/>
    <property type="project" value="TreeGrafter"/>
</dbReference>
<dbReference type="GO" id="GO:0003729">
    <property type="term" value="F:mRNA binding"/>
    <property type="evidence" value="ECO:0007669"/>
    <property type="project" value="TreeGrafter"/>
</dbReference>
<dbReference type="GO" id="GO:0003735">
    <property type="term" value="F:structural constituent of ribosome"/>
    <property type="evidence" value="ECO:0007669"/>
    <property type="project" value="InterPro"/>
</dbReference>
<dbReference type="GO" id="GO:0006412">
    <property type="term" value="P:translation"/>
    <property type="evidence" value="ECO:0007669"/>
    <property type="project" value="UniProtKB-UniRule"/>
</dbReference>
<dbReference type="CDD" id="cd00387">
    <property type="entry name" value="Ribosomal_L7_L12"/>
    <property type="match status" value="1"/>
</dbReference>
<dbReference type="FunFam" id="1.20.5.710:FF:000007">
    <property type="entry name" value="50S ribosomal protein L7/L12"/>
    <property type="match status" value="1"/>
</dbReference>
<dbReference type="FunFam" id="3.30.1390.10:FF:000001">
    <property type="entry name" value="50S ribosomal protein L7/L12"/>
    <property type="match status" value="1"/>
</dbReference>
<dbReference type="Gene3D" id="3.30.1390.10">
    <property type="match status" value="1"/>
</dbReference>
<dbReference type="Gene3D" id="1.20.5.710">
    <property type="entry name" value="Single helix bin"/>
    <property type="match status" value="1"/>
</dbReference>
<dbReference type="HAMAP" id="MF_00368">
    <property type="entry name" value="Ribosomal_bL12"/>
    <property type="match status" value="1"/>
</dbReference>
<dbReference type="InterPro" id="IPR000206">
    <property type="entry name" value="Ribosomal_bL12"/>
</dbReference>
<dbReference type="InterPro" id="IPR013823">
    <property type="entry name" value="Ribosomal_bL12_C"/>
</dbReference>
<dbReference type="InterPro" id="IPR014719">
    <property type="entry name" value="Ribosomal_bL12_C/ClpS-like"/>
</dbReference>
<dbReference type="InterPro" id="IPR008932">
    <property type="entry name" value="Ribosomal_bL12_oligo"/>
</dbReference>
<dbReference type="InterPro" id="IPR036235">
    <property type="entry name" value="Ribosomal_bL12_oligo_N_sf"/>
</dbReference>
<dbReference type="NCBIfam" id="TIGR00855">
    <property type="entry name" value="L12"/>
    <property type="match status" value="1"/>
</dbReference>
<dbReference type="PANTHER" id="PTHR45987">
    <property type="entry name" value="39S RIBOSOMAL PROTEIN L12"/>
    <property type="match status" value="1"/>
</dbReference>
<dbReference type="PANTHER" id="PTHR45987:SF4">
    <property type="entry name" value="LARGE RIBOSOMAL SUBUNIT PROTEIN BL12M"/>
    <property type="match status" value="1"/>
</dbReference>
<dbReference type="Pfam" id="PF00542">
    <property type="entry name" value="Ribosomal_L12"/>
    <property type="match status" value="1"/>
</dbReference>
<dbReference type="Pfam" id="PF16320">
    <property type="entry name" value="Ribosomal_L12_N"/>
    <property type="match status" value="1"/>
</dbReference>
<dbReference type="SUPFAM" id="SSF54736">
    <property type="entry name" value="ClpS-like"/>
    <property type="match status" value="1"/>
</dbReference>
<dbReference type="SUPFAM" id="SSF48300">
    <property type="entry name" value="Ribosomal protein L7/12, oligomerisation (N-terminal) domain"/>
    <property type="match status" value="1"/>
</dbReference>
<protein>
    <recommendedName>
        <fullName evidence="1">Large ribosomal subunit protein bL12</fullName>
    </recommendedName>
    <alternativeName>
        <fullName evidence="2">50S ribosomal protein L7/L12</fullName>
    </alternativeName>
</protein>
<comment type="function">
    <text evidence="1">Forms part of the ribosomal stalk which helps the ribosome interact with GTP-bound translation factors. Is thus essential for accurate translation.</text>
</comment>
<comment type="subunit">
    <text evidence="1">Homodimer. Part of the ribosomal stalk of the 50S ribosomal subunit. Forms a multimeric L10(L12)X complex, where L10 forms an elongated spine to which 2 to 4 L12 dimers bind in a sequential fashion. Binds GTP-bound translation factors.</text>
</comment>
<comment type="similarity">
    <text evidence="1">Belongs to the bacterial ribosomal protein bL12 family.</text>
</comment>
<accession>B1LY44</accession>
<feature type="chain" id="PRO_1000121459" description="Large ribosomal subunit protein bL12">
    <location>
        <begin position="1"/>
        <end position="125"/>
    </location>
</feature>
<proteinExistence type="inferred from homology"/>
<keyword id="KW-0687">Ribonucleoprotein</keyword>
<keyword id="KW-0689">Ribosomal protein</keyword>
<sequence length="125" mass="12750">MADLAKLVDDLSSLTVLEAADLAKMLEEKWGVSAAAAVAVAAGPAAGGAAAAVEEQTEFTVVLASAGDKKIEVIKEVRAITGLGLKEAKDLVEGAPKPVKEGVAKDEAEKLKAQLEKAGAKIELK</sequence>
<gene>
    <name evidence="1" type="primary">rplL</name>
    <name type="ordered locus">Mrad2831_3840</name>
</gene>
<name>RL7_METRJ</name>